<accession>A7ZDK0</accession>
<comment type="function">
    <text evidence="1">Phosphorylation of dTMP to form dTDP in both de novo and salvage pathways of dTTP synthesis.</text>
</comment>
<comment type="catalytic activity">
    <reaction evidence="1">
        <text>dTMP + ATP = dTDP + ADP</text>
        <dbReference type="Rhea" id="RHEA:13517"/>
        <dbReference type="ChEBI" id="CHEBI:30616"/>
        <dbReference type="ChEBI" id="CHEBI:58369"/>
        <dbReference type="ChEBI" id="CHEBI:63528"/>
        <dbReference type="ChEBI" id="CHEBI:456216"/>
        <dbReference type="EC" id="2.7.4.9"/>
    </reaction>
</comment>
<comment type="similarity">
    <text evidence="1">Belongs to the thymidylate kinase family.</text>
</comment>
<evidence type="ECO:0000255" key="1">
    <source>
        <dbReference type="HAMAP-Rule" id="MF_00165"/>
    </source>
</evidence>
<dbReference type="EC" id="2.7.4.9" evidence="1"/>
<dbReference type="EMBL" id="CP000792">
    <property type="protein sequence ID" value="EAT98678.1"/>
    <property type="molecule type" value="Genomic_DNA"/>
</dbReference>
<dbReference type="RefSeq" id="WP_012001783.1">
    <property type="nucleotide sequence ID" value="NC_009802.2"/>
</dbReference>
<dbReference type="SMR" id="A7ZDK0"/>
<dbReference type="STRING" id="360104.CCC13826_1271"/>
<dbReference type="KEGG" id="cco:CCC13826_1271"/>
<dbReference type="eggNOG" id="COG0125">
    <property type="taxonomic scope" value="Bacteria"/>
</dbReference>
<dbReference type="HOGENOM" id="CLU_049131_0_0_7"/>
<dbReference type="OrthoDB" id="9774907at2"/>
<dbReference type="Proteomes" id="UP000001121">
    <property type="component" value="Chromosome"/>
</dbReference>
<dbReference type="GO" id="GO:0005829">
    <property type="term" value="C:cytosol"/>
    <property type="evidence" value="ECO:0007669"/>
    <property type="project" value="TreeGrafter"/>
</dbReference>
<dbReference type="GO" id="GO:0005524">
    <property type="term" value="F:ATP binding"/>
    <property type="evidence" value="ECO:0007669"/>
    <property type="project" value="UniProtKB-UniRule"/>
</dbReference>
<dbReference type="GO" id="GO:0004798">
    <property type="term" value="F:dTMP kinase activity"/>
    <property type="evidence" value="ECO:0007669"/>
    <property type="project" value="UniProtKB-UniRule"/>
</dbReference>
<dbReference type="GO" id="GO:0006233">
    <property type="term" value="P:dTDP biosynthetic process"/>
    <property type="evidence" value="ECO:0007669"/>
    <property type="project" value="InterPro"/>
</dbReference>
<dbReference type="GO" id="GO:0006235">
    <property type="term" value="P:dTTP biosynthetic process"/>
    <property type="evidence" value="ECO:0007669"/>
    <property type="project" value="UniProtKB-UniRule"/>
</dbReference>
<dbReference type="GO" id="GO:0006227">
    <property type="term" value="P:dUDP biosynthetic process"/>
    <property type="evidence" value="ECO:0007669"/>
    <property type="project" value="TreeGrafter"/>
</dbReference>
<dbReference type="CDD" id="cd01672">
    <property type="entry name" value="TMPK"/>
    <property type="match status" value="1"/>
</dbReference>
<dbReference type="Gene3D" id="3.40.50.300">
    <property type="entry name" value="P-loop containing nucleotide triphosphate hydrolases"/>
    <property type="match status" value="1"/>
</dbReference>
<dbReference type="HAMAP" id="MF_00165">
    <property type="entry name" value="Thymidylate_kinase"/>
    <property type="match status" value="1"/>
</dbReference>
<dbReference type="InterPro" id="IPR027417">
    <property type="entry name" value="P-loop_NTPase"/>
</dbReference>
<dbReference type="InterPro" id="IPR039430">
    <property type="entry name" value="Thymidylate_kin-like_dom"/>
</dbReference>
<dbReference type="InterPro" id="IPR018094">
    <property type="entry name" value="Thymidylate_kinase"/>
</dbReference>
<dbReference type="NCBIfam" id="TIGR00041">
    <property type="entry name" value="DTMP_kinase"/>
    <property type="match status" value="1"/>
</dbReference>
<dbReference type="PANTHER" id="PTHR10344">
    <property type="entry name" value="THYMIDYLATE KINASE"/>
    <property type="match status" value="1"/>
</dbReference>
<dbReference type="PANTHER" id="PTHR10344:SF4">
    <property type="entry name" value="UMP-CMP KINASE 2, MITOCHONDRIAL"/>
    <property type="match status" value="1"/>
</dbReference>
<dbReference type="Pfam" id="PF02223">
    <property type="entry name" value="Thymidylate_kin"/>
    <property type="match status" value="1"/>
</dbReference>
<dbReference type="SUPFAM" id="SSF52540">
    <property type="entry name" value="P-loop containing nucleoside triphosphate hydrolases"/>
    <property type="match status" value="1"/>
</dbReference>
<reference key="1">
    <citation type="submission" date="2007-10" db="EMBL/GenBank/DDBJ databases">
        <title>Genome sequence of Campylobacter concisus 13826 isolated from human feces.</title>
        <authorList>
            <person name="Fouts D.E."/>
            <person name="Mongodin E.F."/>
            <person name="Puiu D."/>
            <person name="Sebastian Y."/>
            <person name="Miller W.G."/>
            <person name="Mandrell R.E."/>
            <person name="On S."/>
            <person name="Nelson K.E."/>
        </authorList>
    </citation>
    <scope>NUCLEOTIDE SEQUENCE [LARGE SCALE GENOMIC DNA]</scope>
    <source>
        <strain>13826</strain>
    </source>
</reference>
<feature type="chain" id="PRO_1000023168" description="Thymidylate kinase">
    <location>
        <begin position="1"/>
        <end position="195"/>
    </location>
</feature>
<feature type="binding site" evidence="1">
    <location>
        <begin position="7"/>
        <end position="14"/>
    </location>
    <ligand>
        <name>ATP</name>
        <dbReference type="ChEBI" id="CHEBI:30616"/>
    </ligand>
</feature>
<name>KTHY_CAMC1</name>
<proteinExistence type="inferred from homology"/>
<protein>
    <recommendedName>
        <fullName evidence="1">Thymidylate kinase</fullName>
        <ecNumber evidence="1">2.7.4.9</ecNumber>
    </recommendedName>
    <alternativeName>
        <fullName evidence="1">dTMP kinase</fullName>
    </alternativeName>
</protein>
<sequence length="195" mass="21827">MYVLFEGIDGVGKSTQIEILASKFSDAIVTKEPGGTQLGVNLREILLRSSIKIGKRAEILLFLADRAEHFEKLVAPNLGKLILSDRGFISGIAYALANDENLDENVLLELNKFALNDKFADKIIFFEASRELISSRLKARGTSDKIEARGLEYLLKVQSLMKQILIKNGFETLFIDASKSIELISKEIENFINFK</sequence>
<organism>
    <name type="scientific">Campylobacter concisus (strain 13826)</name>
    <dbReference type="NCBI Taxonomy" id="360104"/>
    <lineage>
        <taxon>Bacteria</taxon>
        <taxon>Pseudomonadati</taxon>
        <taxon>Campylobacterota</taxon>
        <taxon>Epsilonproteobacteria</taxon>
        <taxon>Campylobacterales</taxon>
        <taxon>Campylobacteraceae</taxon>
        <taxon>Campylobacter</taxon>
    </lineage>
</organism>
<keyword id="KW-0067">ATP-binding</keyword>
<keyword id="KW-0418">Kinase</keyword>
<keyword id="KW-0545">Nucleotide biosynthesis</keyword>
<keyword id="KW-0547">Nucleotide-binding</keyword>
<keyword id="KW-0808">Transferase</keyword>
<gene>
    <name evidence="1" type="primary">tmk</name>
    <name type="ordered locus">Ccon26_09940</name>
    <name type="ORF">CCC13826_1271</name>
</gene>